<name>PREY_XENTR</name>
<feature type="transit peptide" description="Mitochondrion" evidence="2">
    <location>
        <begin position="1"/>
        <end position="40"/>
    </location>
</feature>
<feature type="chain" id="PRO_0000246318" description="Protein preY, mitochondrial">
    <location>
        <begin position="41"/>
        <end position="122"/>
    </location>
</feature>
<feature type="domain" description="TRM112">
    <location>
        <begin position="56"/>
        <end position="102"/>
    </location>
</feature>
<comment type="function">
    <text evidence="1">In mitochondria, S-adenosylmethionine-dependent methyltransferase chaperone that supports both coenzyme Q biosynthesis and NADH:ubiquinone oxidoreductase complex (complex I, MT-ND1) assembly.</text>
</comment>
<comment type="subcellular location">
    <subcellularLocation>
        <location evidence="1">Mitochondrion</location>
    </subcellularLocation>
</comment>
<comment type="miscellaneous">
    <text>PIGY is derived from the same bicistronic transcript that encodes these 2 different proteins.</text>
</comment>
<comment type="similarity">
    <text evidence="3">Belongs to the PREY family.</text>
</comment>
<protein>
    <recommendedName>
        <fullName>Protein preY, mitochondrial</fullName>
    </recommendedName>
</protein>
<keyword id="KW-0496">Mitochondrion</keyword>
<keyword id="KW-1185">Reference proteome</keyword>
<keyword id="KW-0809">Transit peptide</keyword>
<sequence length="122" mass="13676">MLAVRAWGRTYNTLVQRKLNAACPTGALPAVTLRPLHCSLVARSPEQSLKDSKTFDPTLLQFLVCPLSRKSLRYEESTNELINDELGIAYPIVDGIPNMIPQDARMIHKDRKPESPDTEQTT</sequence>
<reference key="1">
    <citation type="submission" date="2004-12" db="EMBL/GenBank/DDBJ databases">
        <authorList>
            <consortium name="NIH - Xenopus Gene Collection (XGC) project"/>
        </authorList>
    </citation>
    <scope>NUCLEOTIDE SEQUENCE [LARGE SCALE MRNA]</scope>
</reference>
<proteinExistence type="evidence at transcript level"/>
<organism>
    <name type="scientific">Xenopus tropicalis</name>
    <name type="common">Western clawed frog</name>
    <name type="synonym">Silurana tropicalis</name>
    <dbReference type="NCBI Taxonomy" id="8364"/>
    <lineage>
        <taxon>Eukaryota</taxon>
        <taxon>Metazoa</taxon>
        <taxon>Chordata</taxon>
        <taxon>Craniata</taxon>
        <taxon>Vertebrata</taxon>
        <taxon>Euteleostomi</taxon>
        <taxon>Amphibia</taxon>
        <taxon>Batrachia</taxon>
        <taxon>Anura</taxon>
        <taxon>Pipoidea</taxon>
        <taxon>Pipidae</taxon>
        <taxon>Xenopodinae</taxon>
        <taxon>Xenopus</taxon>
        <taxon>Silurana</taxon>
    </lineage>
</organism>
<dbReference type="EMBL" id="BC087772">
    <property type="protein sequence ID" value="AAH87772.1"/>
    <property type="molecule type" value="mRNA"/>
</dbReference>
<dbReference type="RefSeq" id="NP_001011216.1">
    <property type="nucleotide sequence ID" value="NM_001011216.2"/>
</dbReference>
<dbReference type="SMR" id="Q5M8Z2"/>
<dbReference type="FunCoup" id="Q5M8Z2">
    <property type="interactions" value="724"/>
</dbReference>
<dbReference type="STRING" id="8364.ENSXETP00000004906"/>
<dbReference type="PaxDb" id="8364-ENSXETP00000054548"/>
<dbReference type="GeneID" id="101175705"/>
<dbReference type="KEGG" id="xtr:101175705"/>
<dbReference type="AGR" id="Xenbase:XB-GENE-17329836"/>
<dbReference type="CTD" id="100996939"/>
<dbReference type="Xenbase" id="XB-GENE-17329836">
    <property type="gene designation" value="pyurf"/>
</dbReference>
<dbReference type="eggNOG" id="ENOG502S7H4">
    <property type="taxonomic scope" value="Eukaryota"/>
</dbReference>
<dbReference type="HOGENOM" id="CLU_155659_0_0_1"/>
<dbReference type="InParanoid" id="Q5M8Z2"/>
<dbReference type="OMA" id="HCTSASR"/>
<dbReference type="OrthoDB" id="1884515at2759"/>
<dbReference type="PhylomeDB" id="Q5M8Z2"/>
<dbReference type="TreeFam" id="TF337006"/>
<dbReference type="Proteomes" id="UP000008143">
    <property type="component" value="Chromosome 1"/>
</dbReference>
<dbReference type="GO" id="GO:0005739">
    <property type="term" value="C:mitochondrion"/>
    <property type="evidence" value="ECO:0000250"/>
    <property type="project" value="UniProtKB"/>
</dbReference>
<dbReference type="GO" id="GO:0050821">
    <property type="term" value="P:protein stabilization"/>
    <property type="evidence" value="ECO:0000250"/>
    <property type="project" value="UniProtKB"/>
</dbReference>
<dbReference type="FunFam" id="2.20.25.10:FF:000017">
    <property type="entry name" value="protein preY, mitochondrial"/>
    <property type="match status" value="1"/>
</dbReference>
<dbReference type="Gene3D" id="2.20.25.10">
    <property type="match status" value="1"/>
</dbReference>
<dbReference type="HAMAP" id="MF_01187">
    <property type="entry name" value="UPF0434"/>
    <property type="match status" value="1"/>
</dbReference>
<dbReference type="InterPro" id="IPR005651">
    <property type="entry name" value="Trm112-like"/>
</dbReference>
<dbReference type="PANTHER" id="PTHR33505:SF4">
    <property type="entry name" value="PROTEIN PREY, MITOCHONDRIAL"/>
    <property type="match status" value="1"/>
</dbReference>
<dbReference type="PANTHER" id="PTHR33505">
    <property type="entry name" value="ZGC:162634"/>
    <property type="match status" value="1"/>
</dbReference>
<dbReference type="Pfam" id="PF03966">
    <property type="entry name" value="Trm112p"/>
    <property type="match status" value="1"/>
</dbReference>
<dbReference type="SUPFAM" id="SSF158997">
    <property type="entry name" value="Trm112p-like"/>
    <property type="match status" value="1"/>
</dbReference>
<evidence type="ECO:0000250" key="1">
    <source>
        <dbReference type="UniProtKB" id="Q96I23"/>
    </source>
</evidence>
<evidence type="ECO:0000255" key="2"/>
<evidence type="ECO:0000305" key="3"/>
<gene>
    <name type="primary">pyurf</name>
    <name type="synonym">pigy</name>
    <name type="synonym">prey</name>
</gene>
<accession>Q5M8Z2</accession>